<sequence length="79" mass="9106">MAVKLRLTRMGNKKRAFYRIVAVNSETRRDGRPLEYIGFYNPMVDPAEVKIDAEKVQKWLALGAEPTDTVRNLIKKQQA</sequence>
<protein>
    <recommendedName>
        <fullName evidence="1">Small ribosomal subunit protein bS16</fullName>
    </recommendedName>
    <alternativeName>
        <fullName evidence="2">30S ribosomal protein S16</fullName>
    </alternativeName>
</protein>
<dbReference type="EMBL" id="AE017285">
    <property type="protein sequence ID" value="AAS95319.1"/>
    <property type="molecule type" value="Genomic_DNA"/>
</dbReference>
<dbReference type="RefSeq" id="WP_010938140.1">
    <property type="nucleotide sequence ID" value="NC_002937.3"/>
</dbReference>
<dbReference type="RefSeq" id="YP_010060.1">
    <property type="nucleotide sequence ID" value="NC_002937.3"/>
</dbReference>
<dbReference type="SMR" id="P62229"/>
<dbReference type="STRING" id="882.DVU_0839"/>
<dbReference type="PaxDb" id="882-DVU_0839"/>
<dbReference type="EnsemblBacteria" id="AAS95319">
    <property type="protein sequence ID" value="AAS95319"/>
    <property type="gene ID" value="DVU_0839"/>
</dbReference>
<dbReference type="KEGG" id="dvu:DVU_0839"/>
<dbReference type="PATRIC" id="fig|882.5.peg.785"/>
<dbReference type="eggNOG" id="COG0228">
    <property type="taxonomic scope" value="Bacteria"/>
</dbReference>
<dbReference type="HOGENOM" id="CLU_100590_5_0_7"/>
<dbReference type="OrthoDB" id="9807878at2"/>
<dbReference type="PhylomeDB" id="P62229"/>
<dbReference type="Proteomes" id="UP000002194">
    <property type="component" value="Chromosome"/>
</dbReference>
<dbReference type="GO" id="GO:0005737">
    <property type="term" value="C:cytoplasm"/>
    <property type="evidence" value="ECO:0007669"/>
    <property type="project" value="UniProtKB-ARBA"/>
</dbReference>
<dbReference type="GO" id="GO:0015935">
    <property type="term" value="C:small ribosomal subunit"/>
    <property type="evidence" value="ECO:0007669"/>
    <property type="project" value="TreeGrafter"/>
</dbReference>
<dbReference type="GO" id="GO:0003735">
    <property type="term" value="F:structural constituent of ribosome"/>
    <property type="evidence" value="ECO:0007669"/>
    <property type="project" value="InterPro"/>
</dbReference>
<dbReference type="GO" id="GO:0006412">
    <property type="term" value="P:translation"/>
    <property type="evidence" value="ECO:0007669"/>
    <property type="project" value="UniProtKB-UniRule"/>
</dbReference>
<dbReference type="Gene3D" id="3.30.1320.10">
    <property type="match status" value="1"/>
</dbReference>
<dbReference type="HAMAP" id="MF_00385">
    <property type="entry name" value="Ribosomal_bS16"/>
    <property type="match status" value="1"/>
</dbReference>
<dbReference type="InterPro" id="IPR000307">
    <property type="entry name" value="Ribosomal_bS16"/>
</dbReference>
<dbReference type="InterPro" id="IPR023803">
    <property type="entry name" value="Ribosomal_bS16_dom_sf"/>
</dbReference>
<dbReference type="NCBIfam" id="TIGR00002">
    <property type="entry name" value="S16"/>
    <property type="match status" value="1"/>
</dbReference>
<dbReference type="PANTHER" id="PTHR12919">
    <property type="entry name" value="30S RIBOSOMAL PROTEIN S16"/>
    <property type="match status" value="1"/>
</dbReference>
<dbReference type="PANTHER" id="PTHR12919:SF20">
    <property type="entry name" value="SMALL RIBOSOMAL SUBUNIT PROTEIN BS16M"/>
    <property type="match status" value="1"/>
</dbReference>
<dbReference type="Pfam" id="PF00886">
    <property type="entry name" value="Ribosomal_S16"/>
    <property type="match status" value="1"/>
</dbReference>
<dbReference type="SUPFAM" id="SSF54565">
    <property type="entry name" value="Ribosomal protein S16"/>
    <property type="match status" value="1"/>
</dbReference>
<organism>
    <name type="scientific">Nitratidesulfovibrio vulgaris (strain ATCC 29579 / DSM 644 / CCUG 34227 / NCIMB 8303 / VKM B-1760 / Hildenborough)</name>
    <name type="common">Desulfovibrio vulgaris</name>
    <dbReference type="NCBI Taxonomy" id="882"/>
    <lineage>
        <taxon>Bacteria</taxon>
        <taxon>Pseudomonadati</taxon>
        <taxon>Thermodesulfobacteriota</taxon>
        <taxon>Desulfovibrionia</taxon>
        <taxon>Desulfovibrionales</taxon>
        <taxon>Desulfovibrionaceae</taxon>
        <taxon>Nitratidesulfovibrio</taxon>
    </lineage>
</organism>
<gene>
    <name evidence="1" type="primary">rpsP</name>
    <name type="ordered locus">DVU_0839</name>
</gene>
<evidence type="ECO:0000255" key="1">
    <source>
        <dbReference type="HAMAP-Rule" id="MF_00385"/>
    </source>
</evidence>
<evidence type="ECO:0000305" key="2"/>
<keyword id="KW-1185">Reference proteome</keyword>
<keyword id="KW-0687">Ribonucleoprotein</keyword>
<keyword id="KW-0689">Ribosomal protein</keyword>
<proteinExistence type="inferred from homology"/>
<name>RS16_NITV2</name>
<feature type="chain" id="PRO_0000167183" description="Small ribosomal subunit protein bS16">
    <location>
        <begin position="1"/>
        <end position="79"/>
    </location>
</feature>
<comment type="similarity">
    <text evidence="1">Belongs to the bacterial ribosomal protein bS16 family.</text>
</comment>
<accession>P62229</accession>
<reference key="1">
    <citation type="journal article" date="2004" name="Nat. Biotechnol.">
        <title>The genome sequence of the anaerobic, sulfate-reducing bacterium Desulfovibrio vulgaris Hildenborough.</title>
        <authorList>
            <person name="Heidelberg J.F."/>
            <person name="Seshadri R."/>
            <person name="Haveman S.A."/>
            <person name="Hemme C.L."/>
            <person name="Paulsen I.T."/>
            <person name="Kolonay J.F."/>
            <person name="Eisen J.A."/>
            <person name="Ward N.L."/>
            <person name="Methe B.A."/>
            <person name="Brinkac L.M."/>
            <person name="Daugherty S.C."/>
            <person name="DeBoy R.T."/>
            <person name="Dodson R.J."/>
            <person name="Durkin A.S."/>
            <person name="Madupu R."/>
            <person name="Nelson W.C."/>
            <person name="Sullivan S.A."/>
            <person name="Fouts D.E."/>
            <person name="Haft D.H."/>
            <person name="Selengut J."/>
            <person name="Peterson J.D."/>
            <person name="Davidsen T.M."/>
            <person name="Zafar N."/>
            <person name="Zhou L."/>
            <person name="Radune D."/>
            <person name="Dimitrov G."/>
            <person name="Hance M."/>
            <person name="Tran K."/>
            <person name="Khouri H.M."/>
            <person name="Gill J."/>
            <person name="Utterback T.R."/>
            <person name="Feldblyum T.V."/>
            <person name="Wall J.D."/>
            <person name="Voordouw G."/>
            <person name="Fraser C.M."/>
        </authorList>
    </citation>
    <scope>NUCLEOTIDE SEQUENCE [LARGE SCALE GENOMIC DNA]</scope>
    <source>
        <strain>ATCC 29579 / DSM 644 / CCUG 34227 / NCIMB 8303 / VKM B-1760 / Hildenborough</strain>
    </source>
</reference>